<comment type="function">
    <text evidence="1">Globally modulates RNA abundance by binding to RNase E (Rne) and regulating its endonucleolytic activity. Can modulate Rne action in a substrate-dependent manner by altering the composition of the degradosome. Modulates RNA-binding and helicase activities of the degradosome.</text>
</comment>
<comment type="subunit">
    <text evidence="1">Homotrimer. Binds to both RNA-binding sites in the C-terminal region of Rne and to RhlB.</text>
</comment>
<comment type="subcellular location">
    <subcellularLocation>
        <location evidence="1">Cytoplasm</location>
    </subcellularLocation>
</comment>
<comment type="similarity">
    <text evidence="1">Belongs to the RraA family.</text>
</comment>
<reference key="1">
    <citation type="journal article" date="2008" name="J. Bacteriol.">
        <title>The complete genome sequence of Actinobacillus pleuropneumoniae L20 (serotype 5b).</title>
        <authorList>
            <person name="Foote S.J."/>
            <person name="Bosse J.T."/>
            <person name="Bouevitch A.B."/>
            <person name="Langford P.R."/>
            <person name="Young N.M."/>
            <person name="Nash J.H.E."/>
        </authorList>
    </citation>
    <scope>NUCLEOTIDE SEQUENCE [LARGE SCALE GENOMIC DNA]</scope>
    <source>
        <strain>L20</strain>
    </source>
</reference>
<accession>A3N3J5</accession>
<gene>
    <name evidence="1" type="primary">rraA</name>
    <name type="ordered locus">APL_1901</name>
</gene>
<proteinExistence type="inferred from homology"/>
<keyword id="KW-0963">Cytoplasm</keyword>
<keyword id="KW-1185">Reference proteome</keyword>
<dbReference type="EMBL" id="CP000569">
    <property type="protein sequence ID" value="ABN74981.1"/>
    <property type="molecule type" value="Genomic_DNA"/>
</dbReference>
<dbReference type="RefSeq" id="WP_005599612.1">
    <property type="nucleotide sequence ID" value="NC_009053.1"/>
</dbReference>
<dbReference type="SMR" id="A3N3J5"/>
<dbReference type="STRING" id="416269.APL_1901"/>
<dbReference type="EnsemblBacteria" id="ABN74981">
    <property type="protein sequence ID" value="ABN74981"/>
    <property type="gene ID" value="APL_1901"/>
</dbReference>
<dbReference type="GeneID" id="48600205"/>
<dbReference type="KEGG" id="apl:APL_1901"/>
<dbReference type="eggNOG" id="COG0684">
    <property type="taxonomic scope" value="Bacteria"/>
</dbReference>
<dbReference type="HOGENOM" id="CLU_072626_4_0_6"/>
<dbReference type="Proteomes" id="UP000001432">
    <property type="component" value="Chromosome"/>
</dbReference>
<dbReference type="GO" id="GO:0005737">
    <property type="term" value="C:cytoplasm"/>
    <property type="evidence" value="ECO:0007669"/>
    <property type="project" value="UniProtKB-SubCell"/>
</dbReference>
<dbReference type="GO" id="GO:0060698">
    <property type="term" value="F:endoribonuclease inhibitor activity"/>
    <property type="evidence" value="ECO:0007669"/>
    <property type="project" value="UniProtKB-UniRule"/>
</dbReference>
<dbReference type="GO" id="GO:0019899">
    <property type="term" value="F:enzyme binding"/>
    <property type="evidence" value="ECO:0007669"/>
    <property type="project" value="UniProtKB-UniRule"/>
</dbReference>
<dbReference type="GO" id="GO:0051252">
    <property type="term" value="P:regulation of RNA metabolic process"/>
    <property type="evidence" value="ECO:0007669"/>
    <property type="project" value="InterPro"/>
</dbReference>
<dbReference type="CDD" id="cd16841">
    <property type="entry name" value="RraA_family"/>
    <property type="match status" value="1"/>
</dbReference>
<dbReference type="Gene3D" id="3.50.30.40">
    <property type="entry name" value="Ribonuclease E inhibitor RraA/RraA-like"/>
    <property type="match status" value="1"/>
</dbReference>
<dbReference type="HAMAP" id="MF_00471">
    <property type="entry name" value="RraA"/>
    <property type="match status" value="1"/>
</dbReference>
<dbReference type="InterPro" id="IPR010203">
    <property type="entry name" value="RraA"/>
</dbReference>
<dbReference type="InterPro" id="IPR005493">
    <property type="entry name" value="RraA/RraA-like"/>
</dbReference>
<dbReference type="InterPro" id="IPR036704">
    <property type="entry name" value="RraA/RraA-like_sf"/>
</dbReference>
<dbReference type="InterPro" id="IPR014339">
    <property type="entry name" value="RraA_gpbac"/>
</dbReference>
<dbReference type="NCBIfam" id="TIGR01935">
    <property type="entry name" value="NOT-MenG"/>
    <property type="match status" value="1"/>
</dbReference>
<dbReference type="NCBIfam" id="NF006875">
    <property type="entry name" value="PRK09372.1"/>
    <property type="match status" value="1"/>
</dbReference>
<dbReference type="NCBIfam" id="TIGR02998">
    <property type="entry name" value="RraA_entero"/>
    <property type="match status" value="1"/>
</dbReference>
<dbReference type="PANTHER" id="PTHR33254">
    <property type="entry name" value="4-HYDROXY-4-METHYL-2-OXOGLUTARATE ALDOLASE 3-RELATED"/>
    <property type="match status" value="1"/>
</dbReference>
<dbReference type="PANTHER" id="PTHR33254:SF29">
    <property type="entry name" value="REGULATOR OF RIBONUCLEASE ACTIVITY A"/>
    <property type="match status" value="1"/>
</dbReference>
<dbReference type="Pfam" id="PF03737">
    <property type="entry name" value="RraA-like"/>
    <property type="match status" value="1"/>
</dbReference>
<dbReference type="SUPFAM" id="SSF89562">
    <property type="entry name" value="RraA-like"/>
    <property type="match status" value="1"/>
</dbReference>
<sequence length="165" mass="17625">MRIDTSALCDIYSDQVDVVEPIFSSFGGASSFYGKITTVKCFESNGLIASVLEEEGQGRVLLIDGGGAVRRALIDAELAQLALDNGWEGIIVYGAVRQLDVLETLDIGIHALAPIPVGADDNEIGEVDTPVNFGGVTFFPEDYVYADLTGIILSPELLDLAELEE</sequence>
<organism>
    <name type="scientific">Actinobacillus pleuropneumoniae serotype 5b (strain L20)</name>
    <dbReference type="NCBI Taxonomy" id="416269"/>
    <lineage>
        <taxon>Bacteria</taxon>
        <taxon>Pseudomonadati</taxon>
        <taxon>Pseudomonadota</taxon>
        <taxon>Gammaproteobacteria</taxon>
        <taxon>Pasteurellales</taxon>
        <taxon>Pasteurellaceae</taxon>
        <taxon>Actinobacillus</taxon>
    </lineage>
</organism>
<feature type="chain" id="PRO_1000013821" description="Regulator of ribonuclease activity A">
    <location>
        <begin position="1"/>
        <end position="165"/>
    </location>
</feature>
<evidence type="ECO:0000255" key="1">
    <source>
        <dbReference type="HAMAP-Rule" id="MF_00471"/>
    </source>
</evidence>
<protein>
    <recommendedName>
        <fullName evidence="1">Regulator of ribonuclease activity A</fullName>
    </recommendedName>
</protein>
<name>RRAA_ACTP2</name>